<reference key="1">
    <citation type="journal article" date="2006" name="J. Bacteriol.">
        <title>Comparison of the genome sequence of the poultry pathogen Bordetella avium with those of B. bronchiseptica, B. pertussis, and B. parapertussis reveals extensive diversity in surface structures associated with host interaction.</title>
        <authorList>
            <person name="Sebaihia M."/>
            <person name="Preston A."/>
            <person name="Maskell D.J."/>
            <person name="Kuzmiak H."/>
            <person name="Connell T.D."/>
            <person name="King N.D."/>
            <person name="Orndorff P.E."/>
            <person name="Miyamoto D.M."/>
            <person name="Thomson N.R."/>
            <person name="Harris D."/>
            <person name="Goble A."/>
            <person name="Lord A."/>
            <person name="Murphy L."/>
            <person name="Quail M.A."/>
            <person name="Rutter S."/>
            <person name="Squares R."/>
            <person name="Squares S."/>
            <person name="Woodward J."/>
            <person name="Parkhill J."/>
            <person name="Temple L.M."/>
        </authorList>
    </citation>
    <scope>NUCLEOTIDE SEQUENCE [LARGE SCALE GENOMIC DNA]</scope>
    <source>
        <strain>197N</strain>
    </source>
</reference>
<accession>Q2KVY8</accession>
<name>RUVC_BORA1</name>
<feature type="chain" id="PRO_1000002722" description="Crossover junction endodeoxyribonuclease RuvC">
    <location>
        <begin position="1"/>
        <end position="181"/>
    </location>
</feature>
<feature type="active site" evidence="1">
    <location>
        <position position="7"/>
    </location>
</feature>
<feature type="active site" evidence="1">
    <location>
        <position position="67"/>
    </location>
</feature>
<feature type="active site" evidence="1">
    <location>
        <position position="139"/>
    </location>
</feature>
<feature type="binding site" evidence="1">
    <location>
        <position position="7"/>
    </location>
    <ligand>
        <name>Mg(2+)</name>
        <dbReference type="ChEBI" id="CHEBI:18420"/>
        <label>1</label>
    </ligand>
</feature>
<feature type="binding site" evidence="1">
    <location>
        <position position="67"/>
    </location>
    <ligand>
        <name>Mg(2+)</name>
        <dbReference type="ChEBI" id="CHEBI:18420"/>
        <label>2</label>
    </ligand>
</feature>
<feature type="binding site" evidence="1">
    <location>
        <position position="139"/>
    </location>
    <ligand>
        <name>Mg(2+)</name>
        <dbReference type="ChEBI" id="CHEBI:18420"/>
        <label>1</label>
    </ligand>
</feature>
<proteinExistence type="inferred from homology"/>
<sequence length="181" mass="19173">MRILGIDPGLRRTGFGVVDAEGSRLRYIASGTIVVPPDLALAQRLKVILDNLREVARETRPDVAALEIVFLNANPSSTLLLGHARGAALCALAESGLDVHEYTALQIKKSTVGTGRAAKEQVQMMVQHLLSLNGTPAPDSADALACAICHAHTGPLQERLSPLAATSRSGKSRIRKGRLLG</sequence>
<comment type="function">
    <text evidence="1">The RuvA-RuvB-RuvC complex processes Holliday junction (HJ) DNA during genetic recombination and DNA repair. Endonuclease that resolves HJ intermediates. Cleaves cruciform DNA by making single-stranded nicks across the HJ at symmetrical positions within the homologous arms, yielding a 5'-phosphate and a 3'-hydroxyl group; requires a central core of homology in the junction. The consensus cleavage sequence is 5'-(A/T)TT(C/G)-3'. Cleavage occurs on the 3'-side of the TT dinucleotide at the point of strand exchange. HJ branch migration catalyzed by RuvA-RuvB allows RuvC to scan DNA until it finds its consensus sequence, where it cleaves and resolves the cruciform DNA.</text>
</comment>
<comment type="catalytic activity">
    <reaction evidence="1">
        <text>Endonucleolytic cleavage at a junction such as a reciprocal single-stranded crossover between two homologous DNA duplexes (Holliday junction).</text>
        <dbReference type="EC" id="3.1.21.10"/>
    </reaction>
</comment>
<comment type="cofactor">
    <cofactor evidence="1">
        <name>Mg(2+)</name>
        <dbReference type="ChEBI" id="CHEBI:18420"/>
    </cofactor>
    <text evidence="1">Binds 2 Mg(2+) ion per subunit.</text>
</comment>
<comment type="subunit">
    <text evidence="1">Homodimer which binds Holliday junction (HJ) DNA. The HJ becomes 2-fold symmetrical on binding to RuvC with unstacked arms; it has a different conformation from HJ DNA in complex with RuvA. In the full resolvosome a probable DNA-RuvA(4)-RuvB(12)-RuvC(2) complex forms which resolves the HJ.</text>
</comment>
<comment type="subcellular location">
    <subcellularLocation>
        <location evidence="1">Cytoplasm</location>
    </subcellularLocation>
</comment>
<comment type="similarity">
    <text evidence="1">Belongs to the RuvC family.</text>
</comment>
<keyword id="KW-0963">Cytoplasm</keyword>
<keyword id="KW-0227">DNA damage</keyword>
<keyword id="KW-0233">DNA recombination</keyword>
<keyword id="KW-0234">DNA repair</keyword>
<keyword id="KW-0238">DNA-binding</keyword>
<keyword id="KW-0255">Endonuclease</keyword>
<keyword id="KW-0378">Hydrolase</keyword>
<keyword id="KW-0460">Magnesium</keyword>
<keyword id="KW-0479">Metal-binding</keyword>
<keyword id="KW-0540">Nuclease</keyword>
<keyword id="KW-1185">Reference proteome</keyword>
<dbReference type="EC" id="3.1.21.10" evidence="1"/>
<dbReference type="EMBL" id="AM167904">
    <property type="protein sequence ID" value="CAJ50388.1"/>
    <property type="molecule type" value="Genomic_DNA"/>
</dbReference>
<dbReference type="RefSeq" id="WP_012418419.1">
    <property type="nucleotide sequence ID" value="NC_010645.1"/>
</dbReference>
<dbReference type="SMR" id="Q2KVY8"/>
<dbReference type="STRING" id="360910.BAV2777"/>
<dbReference type="GeneID" id="92933976"/>
<dbReference type="KEGG" id="bav:BAV2777"/>
<dbReference type="eggNOG" id="COG0817">
    <property type="taxonomic scope" value="Bacteria"/>
</dbReference>
<dbReference type="HOGENOM" id="CLU_091257_3_1_4"/>
<dbReference type="OrthoDB" id="9805499at2"/>
<dbReference type="Proteomes" id="UP000001977">
    <property type="component" value="Chromosome"/>
</dbReference>
<dbReference type="GO" id="GO:0005737">
    <property type="term" value="C:cytoplasm"/>
    <property type="evidence" value="ECO:0007669"/>
    <property type="project" value="UniProtKB-SubCell"/>
</dbReference>
<dbReference type="GO" id="GO:0048476">
    <property type="term" value="C:Holliday junction resolvase complex"/>
    <property type="evidence" value="ECO:0007669"/>
    <property type="project" value="UniProtKB-UniRule"/>
</dbReference>
<dbReference type="GO" id="GO:0008821">
    <property type="term" value="F:crossover junction DNA endonuclease activity"/>
    <property type="evidence" value="ECO:0007669"/>
    <property type="project" value="UniProtKB-UniRule"/>
</dbReference>
<dbReference type="GO" id="GO:0003677">
    <property type="term" value="F:DNA binding"/>
    <property type="evidence" value="ECO:0007669"/>
    <property type="project" value="UniProtKB-KW"/>
</dbReference>
<dbReference type="GO" id="GO:0000287">
    <property type="term" value="F:magnesium ion binding"/>
    <property type="evidence" value="ECO:0007669"/>
    <property type="project" value="UniProtKB-UniRule"/>
</dbReference>
<dbReference type="GO" id="GO:0006310">
    <property type="term" value="P:DNA recombination"/>
    <property type="evidence" value="ECO:0007669"/>
    <property type="project" value="UniProtKB-UniRule"/>
</dbReference>
<dbReference type="GO" id="GO:0006281">
    <property type="term" value="P:DNA repair"/>
    <property type="evidence" value="ECO:0007669"/>
    <property type="project" value="UniProtKB-UniRule"/>
</dbReference>
<dbReference type="CDD" id="cd16962">
    <property type="entry name" value="RuvC"/>
    <property type="match status" value="1"/>
</dbReference>
<dbReference type="FunFam" id="3.30.420.10:FF:000002">
    <property type="entry name" value="Crossover junction endodeoxyribonuclease RuvC"/>
    <property type="match status" value="1"/>
</dbReference>
<dbReference type="Gene3D" id="3.30.420.10">
    <property type="entry name" value="Ribonuclease H-like superfamily/Ribonuclease H"/>
    <property type="match status" value="1"/>
</dbReference>
<dbReference type="HAMAP" id="MF_00034">
    <property type="entry name" value="RuvC"/>
    <property type="match status" value="1"/>
</dbReference>
<dbReference type="InterPro" id="IPR012337">
    <property type="entry name" value="RNaseH-like_sf"/>
</dbReference>
<dbReference type="InterPro" id="IPR036397">
    <property type="entry name" value="RNaseH_sf"/>
</dbReference>
<dbReference type="InterPro" id="IPR020563">
    <property type="entry name" value="X-over_junc_endoDNase_Mg_BS"/>
</dbReference>
<dbReference type="InterPro" id="IPR002176">
    <property type="entry name" value="X-over_junc_endoDNase_RuvC"/>
</dbReference>
<dbReference type="NCBIfam" id="TIGR00228">
    <property type="entry name" value="ruvC"/>
    <property type="match status" value="1"/>
</dbReference>
<dbReference type="PANTHER" id="PTHR30194">
    <property type="entry name" value="CROSSOVER JUNCTION ENDODEOXYRIBONUCLEASE RUVC"/>
    <property type="match status" value="1"/>
</dbReference>
<dbReference type="PANTHER" id="PTHR30194:SF3">
    <property type="entry name" value="CROSSOVER JUNCTION ENDODEOXYRIBONUCLEASE RUVC"/>
    <property type="match status" value="1"/>
</dbReference>
<dbReference type="Pfam" id="PF02075">
    <property type="entry name" value="RuvC"/>
    <property type="match status" value="1"/>
</dbReference>
<dbReference type="PRINTS" id="PR00696">
    <property type="entry name" value="RSOLVASERUVC"/>
</dbReference>
<dbReference type="SUPFAM" id="SSF53098">
    <property type="entry name" value="Ribonuclease H-like"/>
    <property type="match status" value="1"/>
</dbReference>
<dbReference type="PROSITE" id="PS01321">
    <property type="entry name" value="RUVC"/>
    <property type="match status" value="1"/>
</dbReference>
<organism>
    <name type="scientific">Bordetella avium (strain 197N)</name>
    <dbReference type="NCBI Taxonomy" id="360910"/>
    <lineage>
        <taxon>Bacteria</taxon>
        <taxon>Pseudomonadati</taxon>
        <taxon>Pseudomonadota</taxon>
        <taxon>Betaproteobacteria</taxon>
        <taxon>Burkholderiales</taxon>
        <taxon>Alcaligenaceae</taxon>
        <taxon>Bordetella</taxon>
    </lineage>
</organism>
<protein>
    <recommendedName>
        <fullName evidence="1">Crossover junction endodeoxyribonuclease RuvC</fullName>
        <ecNumber evidence="1">3.1.21.10</ecNumber>
    </recommendedName>
    <alternativeName>
        <fullName evidence="1">Holliday junction nuclease RuvC</fullName>
    </alternativeName>
    <alternativeName>
        <fullName evidence="1">Holliday junction resolvase RuvC</fullName>
    </alternativeName>
</protein>
<gene>
    <name evidence="1" type="primary">ruvC</name>
    <name type="ordered locus">BAV2777</name>
</gene>
<evidence type="ECO:0000255" key="1">
    <source>
        <dbReference type="HAMAP-Rule" id="MF_00034"/>
    </source>
</evidence>